<accession>C1L2Q5</accession>
<reference key="1">
    <citation type="journal article" date="2012" name="BMC Genomics">
        <title>Comparative genomics and transcriptomics of lineages I, II, and III strains of Listeria monocytogenes.</title>
        <authorList>
            <person name="Hain T."/>
            <person name="Ghai R."/>
            <person name="Billion A."/>
            <person name="Kuenne C.T."/>
            <person name="Steinweg C."/>
            <person name="Izar B."/>
            <person name="Mohamed W."/>
            <person name="Mraheil M."/>
            <person name="Domann E."/>
            <person name="Schaffrath S."/>
            <person name="Karst U."/>
            <person name="Goesmann A."/>
            <person name="Oehm S."/>
            <person name="Puhler A."/>
            <person name="Merkl R."/>
            <person name="Vorwerk S."/>
            <person name="Glaser P."/>
            <person name="Garrido P."/>
            <person name="Rusniok C."/>
            <person name="Buchrieser C."/>
            <person name="Goebel W."/>
            <person name="Chakraborty T."/>
        </authorList>
    </citation>
    <scope>NUCLEOTIDE SEQUENCE [LARGE SCALE GENOMIC DNA]</scope>
    <source>
        <strain>CLIP80459</strain>
    </source>
</reference>
<gene>
    <name evidence="1" type="primary">gcvPA</name>
    <name type="ordered locus">Lm4b_01357</name>
</gene>
<dbReference type="EC" id="1.4.4.2" evidence="1"/>
<dbReference type="EMBL" id="FM242711">
    <property type="protein sequence ID" value="CAS05121.1"/>
    <property type="molecule type" value="Genomic_DNA"/>
</dbReference>
<dbReference type="RefSeq" id="WP_003727482.1">
    <property type="nucleotide sequence ID" value="NC_012488.1"/>
</dbReference>
<dbReference type="SMR" id="C1L2Q5"/>
<dbReference type="KEGG" id="lmc:Lm4b_01357"/>
<dbReference type="HOGENOM" id="CLU_004620_0_2_9"/>
<dbReference type="GO" id="GO:0004375">
    <property type="term" value="F:glycine dehydrogenase (decarboxylating) activity"/>
    <property type="evidence" value="ECO:0007669"/>
    <property type="project" value="UniProtKB-EC"/>
</dbReference>
<dbReference type="GO" id="GO:0019464">
    <property type="term" value="P:glycine decarboxylation via glycine cleavage system"/>
    <property type="evidence" value="ECO:0007669"/>
    <property type="project" value="UniProtKB-UniRule"/>
</dbReference>
<dbReference type="GO" id="GO:0009116">
    <property type="term" value="P:nucleoside metabolic process"/>
    <property type="evidence" value="ECO:0007669"/>
    <property type="project" value="InterPro"/>
</dbReference>
<dbReference type="CDD" id="cd00613">
    <property type="entry name" value="GDC-P"/>
    <property type="match status" value="1"/>
</dbReference>
<dbReference type="FunFam" id="3.40.640.10:FF:000113">
    <property type="entry name" value="Probable glycine dehydrogenase (decarboxylating) subunit 1"/>
    <property type="match status" value="1"/>
</dbReference>
<dbReference type="FunFam" id="3.90.1150.10:FF:000116">
    <property type="entry name" value="Probable glycine dehydrogenase (decarboxylating) subunit 1"/>
    <property type="match status" value="1"/>
</dbReference>
<dbReference type="Gene3D" id="3.90.1150.10">
    <property type="entry name" value="Aspartate Aminotransferase, domain 1"/>
    <property type="match status" value="1"/>
</dbReference>
<dbReference type="Gene3D" id="3.40.640.10">
    <property type="entry name" value="Type I PLP-dependent aspartate aminotransferase-like (Major domain)"/>
    <property type="match status" value="1"/>
</dbReference>
<dbReference type="HAMAP" id="MF_00712">
    <property type="entry name" value="GcvPA"/>
    <property type="match status" value="1"/>
</dbReference>
<dbReference type="InterPro" id="IPR023010">
    <property type="entry name" value="GcvPA"/>
</dbReference>
<dbReference type="InterPro" id="IPR049315">
    <property type="entry name" value="GDC-P_N"/>
</dbReference>
<dbReference type="InterPro" id="IPR020581">
    <property type="entry name" value="GDC_P"/>
</dbReference>
<dbReference type="InterPro" id="IPR015424">
    <property type="entry name" value="PyrdxlP-dep_Trfase"/>
</dbReference>
<dbReference type="InterPro" id="IPR015421">
    <property type="entry name" value="PyrdxlP-dep_Trfase_major"/>
</dbReference>
<dbReference type="InterPro" id="IPR015422">
    <property type="entry name" value="PyrdxlP-dep_Trfase_small"/>
</dbReference>
<dbReference type="NCBIfam" id="NF001696">
    <property type="entry name" value="PRK00451.1"/>
    <property type="match status" value="1"/>
</dbReference>
<dbReference type="PANTHER" id="PTHR42806">
    <property type="entry name" value="GLYCINE CLEAVAGE SYSTEM P-PROTEIN"/>
    <property type="match status" value="1"/>
</dbReference>
<dbReference type="PANTHER" id="PTHR42806:SF1">
    <property type="entry name" value="GLYCINE DEHYDROGENASE (DECARBOXYLATING)"/>
    <property type="match status" value="1"/>
</dbReference>
<dbReference type="Pfam" id="PF02347">
    <property type="entry name" value="GDC-P"/>
    <property type="match status" value="1"/>
</dbReference>
<dbReference type="PIRSF" id="PIRSF006815">
    <property type="entry name" value="GcvPA"/>
    <property type="match status" value="1"/>
</dbReference>
<dbReference type="SUPFAM" id="SSF53383">
    <property type="entry name" value="PLP-dependent transferases"/>
    <property type="match status" value="1"/>
</dbReference>
<keyword id="KW-0560">Oxidoreductase</keyword>
<organism>
    <name type="scientific">Listeria monocytogenes serotype 4b (strain CLIP80459)</name>
    <dbReference type="NCBI Taxonomy" id="568819"/>
    <lineage>
        <taxon>Bacteria</taxon>
        <taxon>Bacillati</taxon>
        <taxon>Bacillota</taxon>
        <taxon>Bacilli</taxon>
        <taxon>Bacillales</taxon>
        <taxon>Listeriaceae</taxon>
        <taxon>Listeria</taxon>
    </lineage>
</organism>
<sequence>MAKHRYLPMTEQDEKEMLDVIGVKSIDDLFQDIPEKIRFKRDYDLKPAKSEPALLRELSQLASKNANTTEYASFLGAGVYSHYIPTVVDHVISRSEFYTAYTPYQPEISQGELQAIFEFQTMIAELTGMDLANSSMYDGGTALAEAAMLASGHTKRKKILISGAVHPESSNVLKTYATGQHIEVEVIPELDGKTDIEALKKALSDDIAGFVVQYPNFYGQVEPLAELEKLVHENNSLLLVSSNPLSLGLLTPPGEFGADIVVGDSQVFGIPESFGGPHCGFFAVTNKLMRKVPGRLVGETVDENGKRGYVLTLQAREQHIRRDKATSNICSNQALNALASSVAMATLGKTGLVEMAKQNLDKSHYAKQKFREKGFEVLFSDGFFNEFVVKLSKPIKEVNESLLDEGIIGGYDLGFYEEKYENHMLVAVTEMRTKEEIDAFVASLEGAK</sequence>
<protein>
    <recommendedName>
        <fullName evidence="1">Probable glycine dehydrogenase (decarboxylating) subunit 1</fullName>
        <ecNumber evidence="1">1.4.4.2</ecNumber>
    </recommendedName>
    <alternativeName>
        <fullName evidence="1">Glycine cleavage system P-protein subunit 1</fullName>
    </alternativeName>
    <alternativeName>
        <fullName evidence="1">Glycine decarboxylase subunit 1</fullName>
    </alternativeName>
    <alternativeName>
        <fullName evidence="1">Glycine dehydrogenase (aminomethyl-transferring) subunit 1</fullName>
    </alternativeName>
</protein>
<evidence type="ECO:0000255" key="1">
    <source>
        <dbReference type="HAMAP-Rule" id="MF_00712"/>
    </source>
</evidence>
<feature type="chain" id="PRO_1000212663" description="Probable glycine dehydrogenase (decarboxylating) subunit 1">
    <location>
        <begin position="1"/>
        <end position="448"/>
    </location>
</feature>
<name>GCSPA_LISMC</name>
<proteinExistence type="inferred from homology"/>
<comment type="function">
    <text evidence="1">The glycine cleavage system catalyzes the degradation of glycine. The P protein binds the alpha-amino group of glycine through its pyridoxal phosphate cofactor; CO(2) is released and the remaining methylamine moiety is then transferred to the lipoamide cofactor of the H protein.</text>
</comment>
<comment type="catalytic activity">
    <reaction evidence="1">
        <text>N(6)-[(R)-lipoyl]-L-lysyl-[glycine-cleavage complex H protein] + glycine + H(+) = N(6)-[(R)-S(8)-aminomethyldihydrolipoyl]-L-lysyl-[glycine-cleavage complex H protein] + CO2</text>
        <dbReference type="Rhea" id="RHEA:24304"/>
        <dbReference type="Rhea" id="RHEA-COMP:10494"/>
        <dbReference type="Rhea" id="RHEA-COMP:10495"/>
        <dbReference type="ChEBI" id="CHEBI:15378"/>
        <dbReference type="ChEBI" id="CHEBI:16526"/>
        <dbReference type="ChEBI" id="CHEBI:57305"/>
        <dbReference type="ChEBI" id="CHEBI:83099"/>
        <dbReference type="ChEBI" id="CHEBI:83143"/>
        <dbReference type="EC" id="1.4.4.2"/>
    </reaction>
</comment>
<comment type="subunit">
    <text evidence="1">The glycine cleavage system is composed of four proteins: P, T, L and H. In this organism, the P 'protein' is a heterodimer of two subunits.</text>
</comment>
<comment type="similarity">
    <text evidence="1">Belongs to the GcvP family. N-terminal subunit subfamily.</text>
</comment>